<organism>
    <name type="scientific">Legionella pneumophila (strain Corby)</name>
    <dbReference type="NCBI Taxonomy" id="400673"/>
    <lineage>
        <taxon>Bacteria</taxon>
        <taxon>Pseudomonadati</taxon>
        <taxon>Pseudomonadota</taxon>
        <taxon>Gammaproteobacteria</taxon>
        <taxon>Legionellales</taxon>
        <taxon>Legionellaceae</taxon>
        <taxon>Legionella</taxon>
    </lineage>
</organism>
<accession>A5IG27</accession>
<dbReference type="EC" id="2.3.1.117" evidence="1"/>
<dbReference type="EMBL" id="CP000675">
    <property type="protein sequence ID" value="ABQ56327.1"/>
    <property type="molecule type" value="Genomic_DNA"/>
</dbReference>
<dbReference type="RefSeq" id="WP_011945992.1">
    <property type="nucleotide sequence ID" value="NC_009494.2"/>
</dbReference>
<dbReference type="SMR" id="A5IG27"/>
<dbReference type="KEGG" id="lpc:LPC_2405"/>
<dbReference type="HOGENOM" id="CLU_050859_0_1_6"/>
<dbReference type="UniPathway" id="UPA00034">
    <property type="reaction ID" value="UER00019"/>
</dbReference>
<dbReference type="GO" id="GO:0005737">
    <property type="term" value="C:cytoplasm"/>
    <property type="evidence" value="ECO:0007669"/>
    <property type="project" value="UniProtKB-SubCell"/>
</dbReference>
<dbReference type="GO" id="GO:0008666">
    <property type="term" value="F:2,3,4,5-tetrahydropyridine-2,6-dicarboxylate N-succinyltransferase activity"/>
    <property type="evidence" value="ECO:0007669"/>
    <property type="project" value="UniProtKB-UniRule"/>
</dbReference>
<dbReference type="GO" id="GO:0016779">
    <property type="term" value="F:nucleotidyltransferase activity"/>
    <property type="evidence" value="ECO:0007669"/>
    <property type="project" value="TreeGrafter"/>
</dbReference>
<dbReference type="GO" id="GO:0019877">
    <property type="term" value="P:diaminopimelate biosynthetic process"/>
    <property type="evidence" value="ECO:0007669"/>
    <property type="project" value="UniProtKB-UniRule"/>
</dbReference>
<dbReference type="GO" id="GO:0009089">
    <property type="term" value="P:lysine biosynthetic process via diaminopimelate"/>
    <property type="evidence" value="ECO:0007669"/>
    <property type="project" value="UniProtKB-UniRule"/>
</dbReference>
<dbReference type="CDD" id="cd03350">
    <property type="entry name" value="LbH_THP_succinylT"/>
    <property type="match status" value="1"/>
</dbReference>
<dbReference type="Gene3D" id="2.160.10.10">
    <property type="entry name" value="Hexapeptide repeat proteins"/>
    <property type="match status" value="1"/>
</dbReference>
<dbReference type="Gene3D" id="1.10.166.10">
    <property type="entry name" value="Tetrahydrodipicolinate-N-succinyltransferase, N-terminal domain"/>
    <property type="match status" value="1"/>
</dbReference>
<dbReference type="HAMAP" id="MF_00811">
    <property type="entry name" value="DapD"/>
    <property type="match status" value="1"/>
</dbReference>
<dbReference type="InterPro" id="IPR005664">
    <property type="entry name" value="DapD_Trfase_Hexpep_rpt_fam"/>
</dbReference>
<dbReference type="InterPro" id="IPR001451">
    <property type="entry name" value="Hexapep"/>
</dbReference>
<dbReference type="InterPro" id="IPR023180">
    <property type="entry name" value="THP_succinylTrfase_dom1"/>
</dbReference>
<dbReference type="InterPro" id="IPR037133">
    <property type="entry name" value="THP_succinylTrfase_N_sf"/>
</dbReference>
<dbReference type="InterPro" id="IPR011004">
    <property type="entry name" value="Trimer_LpxA-like_sf"/>
</dbReference>
<dbReference type="NCBIfam" id="TIGR00965">
    <property type="entry name" value="dapD"/>
    <property type="match status" value="1"/>
</dbReference>
<dbReference type="NCBIfam" id="NF008808">
    <property type="entry name" value="PRK11830.1"/>
    <property type="match status" value="1"/>
</dbReference>
<dbReference type="PANTHER" id="PTHR19136:SF52">
    <property type="entry name" value="2,3,4,5-TETRAHYDROPYRIDINE-2,6-DICARBOXYLATE N-SUCCINYLTRANSFERASE"/>
    <property type="match status" value="1"/>
</dbReference>
<dbReference type="PANTHER" id="PTHR19136">
    <property type="entry name" value="MOLYBDENUM COFACTOR GUANYLYLTRANSFERASE"/>
    <property type="match status" value="1"/>
</dbReference>
<dbReference type="Pfam" id="PF14602">
    <property type="entry name" value="Hexapep_2"/>
    <property type="match status" value="1"/>
</dbReference>
<dbReference type="Pfam" id="PF14805">
    <property type="entry name" value="THDPS_N_2"/>
    <property type="match status" value="1"/>
</dbReference>
<dbReference type="SUPFAM" id="SSF51161">
    <property type="entry name" value="Trimeric LpxA-like enzymes"/>
    <property type="match status" value="1"/>
</dbReference>
<feature type="chain" id="PRO_1000047148" description="2,3,4,5-tetrahydropyridine-2,6-dicarboxylate N-succinyltransferase">
    <location>
        <begin position="1"/>
        <end position="276"/>
    </location>
</feature>
<feature type="binding site" evidence="1">
    <location>
        <position position="104"/>
    </location>
    <ligand>
        <name>substrate</name>
    </ligand>
</feature>
<feature type="binding site" evidence="1">
    <location>
        <position position="141"/>
    </location>
    <ligand>
        <name>substrate</name>
    </ligand>
</feature>
<comment type="catalytic activity">
    <reaction evidence="1">
        <text>(S)-2,3,4,5-tetrahydrodipicolinate + succinyl-CoA + H2O = (S)-2-succinylamino-6-oxoheptanedioate + CoA</text>
        <dbReference type="Rhea" id="RHEA:17325"/>
        <dbReference type="ChEBI" id="CHEBI:15377"/>
        <dbReference type="ChEBI" id="CHEBI:15685"/>
        <dbReference type="ChEBI" id="CHEBI:16845"/>
        <dbReference type="ChEBI" id="CHEBI:57287"/>
        <dbReference type="ChEBI" id="CHEBI:57292"/>
        <dbReference type="EC" id="2.3.1.117"/>
    </reaction>
</comment>
<comment type="pathway">
    <text evidence="1">Amino-acid biosynthesis; L-lysine biosynthesis via DAP pathway; LL-2,6-diaminopimelate from (S)-tetrahydrodipicolinate (succinylase route): step 1/3.</text>
</comment>
<comment type="subunit">
    <text evidence="1">Homotrimer.</text>
</comment>
<comment type="subcellular location">
    <subcellularLocation>
        <location evidence="1">Cytoplasm</location>
    </subcellularLocation>
</comment>
<comment type="similarity">
    <text evidence="1">Belongs to the transferase hexapeptide repeat family.</text>
</comment>
<sequence length="276" mass="29979">MNSLQALIEQAFENRQNLSLDTASSDLINAINEVLSGLDNGQFRVAEKINGEWTVHQWLKKAVLLSFKLFPNQIIDAGFCQFYDKIPLKYTDCSNEQFSQSGVRVVPHGMVRRGAYIAKNTVLMPSYVNIGAYIDEGVMVDTWATVGSCAQIGKNVHISGGAGIGGVLEPLQANPTIIEDNCFIGARSEIVEGVIVEKNSVISMGVFLGQSTKIYNRITGEVSYGRIPAGSVVVAGNLPSHDGSHSLYCAVIVKQVDEKTRAKVSINDLLRANQDD</sequence>
<gene>
    <name evidence="1" type="primary">dapD</name>
    <name type="ordered locus">LPC_2405</name>
</gene>
<name>DAPD_LEGPC</name>
<keyword id="KW-0012">Acyltransferase</keyword>
<keyword id="KW-0028">Amino-acid biosynthesis</keyword>
<keyword id="KW-0963">Cytoplasm</keyword>
<keyword id="KW-0220">Diaminopimelate biosynthesis</keyword>
<keyword id="KW-0457">Lysine biosynthesis</keyword>
<keyword id="KW-0677">Repeat</keyword>
<keyword id="KW-0808">Transferase</keyword>
<protein>
    <recommendedName>
        <fullName evidence="1">2,3,4,5-tetrahydropyridine-2,6-dicarboxylate N-succinyltransferase</fullName>
        <ecNumber evidence="1">2.3.1.117</ecNumber>
    </recommendedName>
    <alternativeName>
        <fullName evidence="1">Tetrahydrodipicolinate N-succinyltransferase</fullName>
        <shortName evidence="1">THDP succinyltransferase</shortName>
        <shortName evidence="1">THP succinyltransferase</shortName>
        <shortName evidence="1">Tetrahydropicolinate succinylase</shortName>
    </alternativeName>
</protein>
<evidence type="ECO:0000255" key="1">
    <source>
        <dbReference type="HAMAP-Rule" id="MF_00811"/>
    </source>
</evidence>
<reference key="1">
    <citation type="submission" date="2006-11" db="EMBL/GenBank/DDBJ databases">
        <title>Identification and characterization of a new conjugation/ type IVA secretion system (trb/tra) of L. pneumophila Corby localized on a mobile genomic island.</title>
        <authorList>
            <person name="Gloeckner G."/>
            <person name="Albert-Weissenberger C."/>
            <person name="Weinmann E."/>
            <person name="Jacobi S."/>
            <person name="Schunder E."/>
            <person name="Steinert M."/>
            <person name="Buchrieser C."/>
            <person name="Hacker J."/>
            <person name="Heuner K."/>
        </authorList>
    </citation>
    <scope>NUCLEOTIDE SEQUENCE [LARGE SCALE GENOMIC DNA]</scope>
    <source>
        <strain>Corby</strain>
    </source>
</reference>
<proteinExistence type="inferred from homology"/>